<name>WNT1_ALOVU</name>
<protein>
    <recommendedName>
        <fullName>Protein Wnt-1</fullName>
    </recommendedName>
</protein>
<keyword id="KW-0217">Developmental protein</keyword>
<keyword id="KW-1015">Disulfide bond</keyword>
<keyword id="KW-0272">Extracellular matrix</keyword>
<keyword id="KW-0325">Glycoprotein</keyword>
<keyword id="KW-0449">Lipoprotein</keyword>
<keyword id="KW-0964">Secreted</keyword>
<keyword id="KW-0879">Wnt signaling pathway</keyword>
<organism>
    <name type="scientific">Alopias vulpinus</name>
    <name type="common">Common thresher shark</name>
    <name type="synonym">Squalus vulpinus</name>
    <dbReference type="NCBI Taxonomy" id="7852"/>
    <lineage>
        <taxon>Eukaryota</taxon>
        <taxon>Metazoa</taxon>
        <taxon>Chordata</taxon>
        <taxon>Craniata</taxon>
        <taxon>Vertebrata</taxon>
        <taxon>Chondrichthyes</taxon>
        <taxon>Elasmobranchii</taxon>
        <taxon>Galeomorphii</taxon>
        <taxon>Galeoidea</taxon>
        <taxon>Lamniformes</taxon>
        <taxon>Alopiidae</taxon>
        <taxon>Alopias</taxon>
    </lineage>
</organism>
<sequence length="126" mass="13889">SGSCTVKTCWMRLPTFRTVGNLLKERFDGASRVIYGNKGSNRASRADMRHLEPEDPAHKPHSPQDLVYFERSPNFCAANSKVGTAGTTGRACNNTSLGLDGCDLLCCGRGFRTLTERVTERCHCTF</sequence>
<gene>
    <name type="primary">WNT-1</name>
</gene>
<accession>P28100</accession>
<dbReference type="EMBL" id="M91250">
    <property type="protein sequence ID" value="AAA48537.1"/>
    <property type="molecule type" value="Genomic_DNA"/>
</dbReference>
<dbReference type="SMR" id="P28100"/>
<dbReference type="GlyCosmos" id="P28100">
    <property type="glycosylation" value="2 sites, No reported glycans"/>
</dbReference>
<dbReference type="GO" id="GO:0005615">
    <property type="term" value="C:extracellular space"/>
    <property type="evidence" value="ECO:0007669"/>
    <property type="project" value="TreeGrafter"/>
</dbReference>
<dbReference type="GO" id="GO:0005125">
    <property type="term" value="F:cytokine activity"/>
    <property type="evidence" value="ECO:0007669"/>
    <property type="project" value="TreeGrafter"/>
</dbReference>
<dbReference type="GO" id="GO:0005109">
    <property type="term" value="F:frizzled binding"/>
    <property type="evidence" value="ECO:0007669"/>
    <property type="project" value="TreeGrafter"/>
</dbReference>
<dbReference type="GO" id="GO:0060070">
    <property type="term" value="P:canonical Wnt signaling pathway"/>
    <property type="evidence" value="ECO:0007669"/>
    <property type="project" value="TreeGrafter"/>
</dbReference>
<dbReference type="GO" id="GO:0045165">
    <property type="term" value="P:cell fate commitment"/>
    <property type="evidence" value="ECO:0007669"/>
    <property type="project" value="TreeGrafter"/>
</dbReference>
<dbReference type="GO" id="GO:0030182">
    <property type="term" value="P:neuron differentiation"/>
    <property type="evidence" value="ECO:0007669"/>
    <property type="project" value="TreeGrafter"/>
</dbReference>
<dbReference type="Gene3D" id="3.30.2460.20">
    <property type="match status" value="1"/>
</dbReference>
<dbReference type="InterPro" id="IPR005817">
    <property type="entry name" value="Wnt"/>
</dbReference>
<dbReference type="InterPro" id="IPR009139">
    <property type="entry name" value="Wnt1"/>
</dbReference>
<dbReference type="InterPro" id="IPR043158">
    <property type="entry name" value="Wnt_C"/>
</dbReference>
<dbReference type="PANTHER" id="PTHR12027:SF91">
    <property type="entry name" value="PROTO-ONCOGENE WNT-1"/>
    <property type="match status" value="1"/>
</dbReference>
<dbReference type="PANTHER" id="PTHR12027">
    <property type="entry name" value="WNT RELATED"/>
    <property type="match status" value="1"/>
</dbReference>
<dbReference type="Pfam" id="PF00110">
    <property type="entry name" value="wnt"/>
    <property type="match status" value="1"/>
</dbReference>
<dbReference type="PRINTS" id="PR01841">
    <property type="entry name" value="WNT1PROTEIN"/>
</dbReference>
<dbReference type="SMART" id="SM00097">
    <property type="entry name" value="WNT1"/>
    <property type="match status" value="1"/>
</dbReference>
<reference key="1">
    <citation type="journal article" date="1992" name="Proc. Natl. Acad. Sci. U.S.A.">
        <title>Diversification of the Wnt gene family on the ancestral lineage of vertebrates.</title>
        <authorList>
            <person name="Sidow A."/>
        </authorList>
    </citation>
    <scope>NUCLEOTIDE SEQUENCE [GENOMIC DNA]</scope>
</reference>
<proteinExistence type="inferred from homology"/>
<feature type="chain" id="PRO_0000200602" description="Protein Wnt-1">
    <location>
        <begin position="1" status="less than"/>
        <end position="126" status="greater than"/>
    </location>
</feature>
<feature type="lipid moiety-binding region" description="O-palmitoleoyl serine; by PORCN" evidence="4">
    <location>
        <position position="1"/>
    </location>
</feature>
<feature type="glycosylation site" description="N-linked (GlcNAc...) asparagine" evidence="5">
    <location>
        <position position="93"/>
    </location>
</feature>
<feature type="glycosylation site" description="N-linked (GlcNAc...) asparagine" evidence="5">
    <location>
        <position position="94"/>
    </location>
</feature>
<feature type="disulfide bond" evidence="2">
    <location>
        <begin position="92"/>
        <end position="107"/>
    </location>
</feature>
<feature type="non-terminal residue">
    <location>
        <position position="1"/>
    </location>
</feature>
<feature type="non-terminal residue">
    <location>
        <position position="126"/>
    </location>
</feature>
<comment type="function">
    <text evidence="4">Ligand for members of the frizzled family of seven transmembrane receptors. Probable developmental protein.</text>
</comment>
<comment type="subcellular location">
    <subcellularLocation>
        <location evidence="1">Secreted</location>
        <location evidence="1">Extracellular space</location>
        <location evidence="1">Extracellular matrix</location>
    </subcellularLocation>
    <subcellularLocation>
        <location evidence="1">Secreted</location>
    </subcellularLocation>
</comment>
<comment type="PTM">
    <text evidence="3 4">Palmitoleoylation is required for efficient binding to frizzled receptors. Palmitoleoylation is necessary for proper trafficking to cell surface (By similarity). Depalmitoleoylated by NOTUM, leading to inhibit Wnt signaling pathway (By similarity).</text>
</comment>
<comment type="similarity">
    <text evidence="6">Belongs to the Wnt family.</text>
</comment>
<evidence type="ECO:0000250" key="1">
    <source>
        <dbReference type="UniProtKB" id="P04628"/>
    </source>
</evidence>
<evidence type="ECO:0000250" key="2">
    <source>
        <dbReference type="UniProtKB" id="P28026"/>
    </source>
</evidence>
<evidence type="ECO:0000250" key="3">
    <source>
        <dbReference type="UniProtKB" id="P56704"/>
    </source>
</evidence>
<evidence type="ECO:0000250" key="4">
    <source>
        <dbReference type="UniProtKB" id="Q91029"/>
    </source>
</evidence>
<evidence type="ECO:0000255" key="5"/>
<evidence type="ECO:0000305" key="6"/>